<organism>
    <name type="scientific">Bos taurus</name>
    <name type="common">Bovine</name>
    <dbReference type="NCBI Taxonomy" id="9913"/>
    <lineage>
        <taxon>Eukaryota</taxon>
        <taxon>Metazoa</taxon>
        <taxon>Chordata</taxon>
        <taxon>Craniata</taxon>
        <taxon>Vertebrata</taxon>
        <taxon>Euteleostomi</taxon>
        <taxon>Mammalia</taxon>
        <taxon>Eutheria</taxon>
        <taxon>Laurasiatheria</taxon>
        <taxon>Artiodactyla</taxon>
        <taxon>Ruminantia</taxon>
        <taxon>Pecora</taxon>
        <taxon>Bovidae</taxon>
        <taxon>Bovinae</taxon>
        <taxon>Bos</taxon>
    </lineage>
</organism>
<name>F200C_BOVIN</name>
<protein>
    <recommendedName>
        <fullName>Protein FAM200C</fullName>
    </recommendedName>
    <alternativeName>
        <fullName>Protein ZBED8</fullName>
    </alternativeName>
    <alternativeName>
        <fullName>Transposon-derived Buster3 transposase-like protein</fullName>
    </alternativeName>
    <alternativeName>
        <fullName>Zinc finger BED domain-containing protein 8</fullName>
    </alternativeName>
</protein>
<feature type="chain" id="PRO_0000348451" description="Protein FAM200C">
    <location>
        <begin position="1"/>
        <end position="594"/>
    </location>
</feature>
<feature type="sequence conflict" description="In Ref. 2; AAI40633." evidence="1" ref="2">
    <original>S</original>
    <variation>T</variation>
    <location>
        <position position="593"/>
    </location>
</feature>
<sequence>MSKKRKWDDDYVRYWFTCVTEIDGTQRPQCVLCNSVFSNADLRPSKLSDHFNRQHGGIGGHDLSSLKHVPVPADQSETLKTFGVASQEDALLQASYQFAYLCAKEKNPHTIAEKLVKPCALEIAQIVLGPDAQKKLQQVPLSDDVIHSRIDEMSQDILQQVLEDIKASPLKVGIQLAETTDMDDCSQLMAFVRYIREREIVEEFLFCEPLQLTMKGKDVFNLFRDFFLKHKIALDVCGSVCTDGASSMLGENSEFVCCVKKEVPHIVITHCLVNPHTLVTKTLPTKLRDALFTVVRVINFIKGRAPNHRLFQAFFEEIGIEYSVLLFHTEMRWLSRGQILTHIFEMHEEINQFLHHQSSNLVDGFENKEFKIHLAYLADLFKHLNELSASMQRTGMNTVSAREKLSAFVRKFPFWLKRIEKRNFTNFPFLEEIVVSDNEALCIAAEITLHLQQLSSFFNGYFSVGDLDEASKWILDPFLFNLDFVDDGYLVKNDLAELRASGQILMEFETMKLEDFWCAQFTVFPSLAKTALEILIPFATTYLCELGFSSLLHFKTKSRSCLNMSDDIRVAISKKVPRFSDIIEQKLQLQQKSL</sequence>
<gene>
    <name type="primary">FAM200C</name>
    <name type="synonym">Buster3</name>
    <name type="synonym">ZBED8</name>
</gene>
<reference key="1">
    <citation type="submission" date="2006-04" db="EMBL/GenBank/DDBJ databases">
        <title>Human Buster genes have insect orthologs that are autonomous transposable elements.</title>
        <authorList>
            <person name="Arensburger P."/>
            <person name="Hice R.H."/>
            <person name="Zhou L."/>
            <person name="Smith R.C."/>
            <person name="O'Brochta D.A."/>
            <person name="Craig N.L."/>
            <person name="Atkinson P.W."/>
        </authorList>
    </citation>
    <scope>NUCLEOTIDE SEQUENCE [GENOMIC DNA]</scope>
</reference>
<reference key="2">
    <citation type="submission" date="2007-04" db="EMBL/GenBank/DDBJ databases">
        <authorList>
            <consortium name="NIH - Mammalian Gene Collection (MGC) project"/>
        </authorList>
    </citation>
    <scope>NUCLEOTIDE SEQUENCE [LARGE SCALE MRNA]</scope>
    <source>
        <strain>Hereford</strain>
        <tissue>Thymus</tissue>
    </source>
</reference>
<dbReference type="EMBL" id="DQ486152">
    <property type="protein sequence ID" value="ABF22697.1"/>
    <property type="molecule type" value="Genomic_DNA"/>
</dbReference>
<dbReference type="EMBL" id="BC140632">
    <property type="protein sequence ID" value="AAI40633.1"/>
    <property type="molecule type" value="mRNA"/>
</dbReference>
<dbReference type="RefSeq" id="NP_001091576.1">
    <property type="nucleotide sequence ID" value="NM_001098107.2"/>
</dbReference>
<dbReference type="RefSeq" id="XP_005209744.1">
    <property type="nucleotide sequence ID" value="XM_005209687.5"/>
</dbReference>
<dbReference type="RefSeq" id="XP_015327832.1">
    <property type="nucleotide sequence ID" value="XM_015472346.1"/>
</dbReference>
<dbReference type="FunCoup" id="A4Z945">
    <property type="interactions" value="666"/>
</dbReference>
<dbReference type="STRING" id="9913.ENSBTAP00000040385"/>
<dbReference type="PaxDb" id="9913-ENSBTAP00000040385"/>
<dbReference type="Ensembl" id="ENSBTAT00000042759.5">
    <property type="protein sequence ID" value="ENSBTAP00000040385.3"/>
    <property type="gene ID" value="ENSBTAG00000030282.5"/>
</dbReference>
<dbReference type="Ensembl" id="ENSBTAT00000134614.1">
    <property type="protein sequence ID" value="ENSBTAP00000093666.1"/>
    <property type="gene ID" value="ENSBTAG00000030282.5"/>
</dbReference>
<dbReference type="GeneID" id="539846"/>
<dbReference type="KEGG" id="bta:539846"/>
<dbReference type="CTD" id="63920"/>
<dbReference type="VEuPathDB" id="HostDB:ENSBTAG00000030282"/>
<dbReference type="VGNC" id="VGNC:37055">
    <property type="gene designation" value="FAM200C"/>
</dbReference>
<dbReference type="eggNOG" id="ENOG502QT83">
    <property type="taxonomic scope" value="Eukaryota"/>
</dbReference>
<dbReference type="GeneTree" id="ENSGT00940000163112"/>
<dbReference type="HOGENOM" id="CLU_021316_5_0_1"/>
<dbReference type="InParanoid" id="A4Z945"/>
<dbReference type="OMA" id="TTDMEDC"/>
<dbReference type="OrthoDB" id="6144063at2759"/>
<dbReference type="TreeFam" id="TF328297"/>
<dbReference type="Proteomes" id="UP000009136">
    <property type="component" value="Chromosome 7"/>
</dbReference>
<dbReference type="Bgee" id="ENSBTAG00000030282">
    <property type="expression patterns" value="Expressed in pituitary gland and 105 other cell types or tissues"/>
</dbReference>
<dbReference type="GO" id="GO:0005654">
    <property type="term" value="C:nucleoplasm"/>
    <property type="evidence" value="ECO:0007669"/>
    <property type="project" value="Ensembl"/>
</dbReference>
<dbReference type="PANTHER" id="PTHR45913">
    <property type="entry name" value="EPM2A-INTERACTING PROTEIN 1"/>
    <property type="match status" value="1"/>
</dbReference>
<dbReference type="PANTHER" id="PTHR45913:SF19">
    <property type="entry name" value="LOW QUALITY PROTEIN: ZINC FINGER BED DOMAIN-CONTAINING PROTEIN 5-LIKE"/>
    <property type="match status" value="1"/>
</dbReference>
<accession>A4Z945</accession>
<accession>A5D7P2</accession>
<proteinExistence type="evidence at transcript level"/>
<keyword id="KW-1185">Reference proteome</keyword>
<evidence type="ECO:0000305" key="1"/>
<comment type="miscellaneous">
    <text>May be derived from an ancient transposon that has lost its ability to translocate.</text>
</comment>